<keyword id="KW-0489">Methyltransferase</keyword>
<keyword id="KW-0949">S-adenosyl-L-methionine</keyword>
<keyword id="KW-0808">Transferase</keyword>
<proteinExistence type="inferred from homology"/>
<protein>
    <recommendedName>
        <fullName evidence="1">Diphthine synthase</fullName>
        <ecNumber evidence="1">2.1.1.98</ecNumber>
    </recommendedName>
    <alternativeName>
        <fullName evidence="1">Diphthamide biosynthesis methyltransferase</fullName>
    </alternativeName>
</protein>
<gene>
    <name evidence="1" type="primary">dphB</name>
    <name type="ordered locus">MmarC5_1019</name>
</gene>
<name>DPHB_METM5</name>
<reference key="1">
    <citation type="submission" date="2007-03" db="EMBL/GenBank/DDBJ databases">
        <title>Complete sequence of chromosome of Methanococcus maripaludis C5.</title>
        <authorList>
            <consortium name="US DOE Joint Genome Institute"/>
            <person name="Copeland A."/>
            <person name="Lucas S."/>
            <person name="Lapidus A."/>
            <person name="Barry K."/>
            <person name="Glavina del Rio T."/>
            <person name="Dalin E."/>
            <person name="Tice H."/>
            <person name="Pitluck S."/>
            <person name="Chertkov O."/>
            <person name="Brettin T."/>
            <person name="Bruce D."/>
            <person name="Han C."/>
            <person name="Detter J.C."/>
            <person name="Schmutz J."/>
            <person name="Larimer F."/>
            <person name="Land M."/>
            <person name="Hauser L."/>
            <person name="Kyrpides N."/>
            <person name="Mikhailova N."/>
            <person name="Sieprawska-Lupa M."/>
            <person name="Whitman W.B."/>
            <person name="Richardson P."/>
        </authorList>
    </citation>
    <scope>NUCLEOTIDE SEQUENCE [LARGE SCALE GENOMIC DNA]</scope>
    <source>
        <strain>C5 / ATCC BAA-1333</strain>
    </source>
</reference>
<feature type="chain" id="PRO_1000064821" description="Diphthine synthase">
    <location>
        <begin position="1"/>
        <end position="255"/>
    </location>
</feature>
<feature type="binding site" evidence="1">
    <location>
        <position position="9"/>
    </location>
    <ligand>
        <name>S-adenosyl-L-methionine</name>
        <dbReference type="ChEBI" id="CHEBI:59789"/>
    </ligand>
</feature>
<feature type="binding site" evidence="1">
    <location>
        <position position="85"/>
    </location>
    <ligand>
        <name>S-adenosyl-L-methionine</name>
        <dbReference type="ChEBI" id="CHEBI:59789"/>
    </ligand>
</feature>
<feature type="binding site" evidence="1">
    <location>
        <position position="88"/>
    </location>
    <ligand>
        <name>S-adenosyl-L-methionine</name>
        <dbReference type="ChEBI" id="CHEBI:59789"/>
    </ligand>
</feature>
<feature type="binding site" evidence="1">
    <location>
        <begin position="113"/>
        <end position="114"/>
    </location>
    <ligand>
        <name>S-adenosyl-L-methionine</name>
        <dbReference type="ChEBI" id="CHEBI:59789"/>
    </ligand>
</feature>
<feature type="binding site" evidence="1">
    <location>
        <position position="164"/>
    </location>
    <ligand>
        <name>S-adenosyl-L-methionine</name>
        <dbReference type="ChEBI" id="CHEBI:59789"/>
    </ligand>
</feature>
<feature type="binding site" evidence="1">
    <location>
        <position position="207"/>
    </location>
    <ligand>
        <name>S-adenosyl-L-methionine</name>
        <dbReference type="ChEBI" id="CHEBI:59789"/>
    </ligand>
</feature>
<feature type="binding site" evidence="1">
    <location>
        <position position="232"/>
    </location>
    <ligand>
        <name>S-adenosyl-L-methionine</name>
        <dbReference type="ChEBI" id="CHEBI:59789"/>
    </ligand>
</feature>
<evidence type="ECO:0000255" key="1">
    <source>
        <dbReference type="HAMAP-Rule" id="MF_01084"/>
    </source>
</evidence>
<comment type="function">
    <text evidence="1">S-adenosyl-L-methionine-dependent methyltransferase that catalyzes the trimethylation of the amino group of the modified target histidine residue in translation elongation factor 2 (EF-2), to form an intermediate called diphthine. The three successive methylation reactions represent the second step of diphthamide biosynthesis.</text>
</comment>
<comment type="catalytic activity">
    <reaction evidence="1">
        <text>2-[(3S)-amino-3-carboxypropyl]-L-histidyl-[translation elongation factor 2] + 3 S-adenosyl-L-methionine = diphthine-[translation elongation factor 2] + 3 S-adenosyl-L-homocysteine + 3 H(+)</text>
        <dbReference type="Rhea" id="RHEA:36415"/>
        <dbReference type="Rhea" id="RHEA-COMP:9749"/>
        <dbReference type="Rhea" id="RHEA-COMP:10172"/>
        <dbReference type="ChEBI" id="CHEBI:15378"/>
        <dbReference type="ChEBI" id="CHEBI:57856"/>
        <dbReference type="ChEBI" id="CHEBI:59789"/>
        <dbReference type="ChEBI" id="CHEBI:73995"/>
        <dbReference type="ChEBI" id="CHEBI:82696"/>
        <dbReference type="EC" id="2.1.1.98"/>
    </reaction>
</comment>
<comment type="pathway">
    <text evidence="1">Protein modification; peptidyl-diphthamide biosynthesis.</text>
</comment>
<comment type="subunit">
    <text evidence="1">Homodimer.</text>
</comment>
<comment type="similarity">
    <text evidence="1">Belongs to the diphthine synthase family.</text>
</comment>
<organism>
    <name type="scientific">Methanococcus maripaludis (strain C5 / ATCC BAA-1333)</name>
    <dbReference type="NCBI Taxonomy" id="402880"/>
    <lineage>
        <taxon>Archaea</taxon>
        <taxon>Methanobacteriati</taxon>
        <taxon>Methanobacteriota</taxon>
        <taxon>Methanomada group</taxon>
        <taxon>Methanococci</taxon>
        <taxon>Methanococcales</taxon>
        <taxon>Methanococcaceae</taxon>
        <taxon>Methanococcus</taxon>
    </lineage>
</organism>
<accession>A4FYP1</accession>
<dbReference type="EC" id="2.1.1.98" evidence="1"/>
<dbReference type="EMBL" id="CP000609">
    <property type="protein sequence ID" value="ABO35325.1"/>
    <property type="molecule type" value="Genomic_DNA"/>
</dbReference>
<dbReference type="RefSeq" id="WP_011868778.1">
    <property type="nucleotide sequence ID" value="NC_009135.1"/>
</dbReference>
<dbReference type="SMR" id="A4FYP1"/>
<dbReference type="STRING" id="402880.MmarC5_1019"/>
<dbReference type="GeneID" id="4928434"/>
<dbReference type="KEGG" id="mmq:MmarC5_1019"/>
<dbReference type="eggNOG" id="arCOG04161">
    <property type="taxonomic scope" value="Archaea"/>
</dbReference>
<dbReference type="HOGENOM" id="CLU_066040_1_0_2"/>
<dbReference type="OrthoDB" id="39139at2157"/>
<dbReference type="UniPathway" id="UPA00559"/>
<dbReference type="Proteomes" id="UP000000253">
    <property type="component" value="Chromosome"/>
</dbReference>
<dbReference type="GO" id="GO:0004164">
    <property type="term" value="F:diphthine synthase activity"/>
    <property type="evidence" value="ECO:0007669"/>
    <property type="project" value="UniProtKB-UniRule"/>
</dbReference>
<dbReference type="GO" id="GO:0032259">
    <property type="term" value="P:methylation"/>
    <property type="evidence" value="ECO:0007669"/>
    <property type="project" value="UniProtKB-KW"/>
</dbReference>
<dbReference type="GO" id="GO:0017183">
    <property type="term" value="P:protein histidyl modification to diphthamide"/>
    <property type="evidence" value="ECO:0007669"/>
    <property type="project" value="UniProtKB-UniRule"/>
</dbReference>
<dbReference type="CDD" id="cd11647">
    <property type="entry name" value="DHP5_DphB"/>
    <property type="match status" value="1"/>
</dbReference>
<dbReference type="Gene3D" id="3.40.1010.10">
    <property type="entry name" value="Cobalt-precorrin-4 Transmethylase, Domain 1"/>
    <property type="match status" value="1"/>
</dbReference>
<dbReference type="Gene3D" id="3.30.950.10">
    <property type="entry name" value="Methyltransferase, Cobalt-precorrin-4 Transmethylase, Domain 2"/>
    <property type="match status" value="1"/>
</dbReference>
<dbReference type="HAMAP" id="MF_01084">
    <property type="entry name" value="Diphthine_synth"/>
    <property type="match status" value="1"/>
</dbReference>
<dbReference type="InterPro" id="IPR000878">
    <property type="entry name" value="4pyrrol_Mease"/>
</dbReference>
<dbReference type="InterPro" id="IPR035996">
    <property type="entry name" value="4pyrrol_Methylase_sf"/>
</dbReference>
<dbReference type="InterPro" id="IPR014777">
    <property type="entry name" value="4pyrrole_Mease_sub1"/>
</dbReference>
<dbReference type="InterPro" id="IPR014776">
    <property type="entry name" value="4pyrrole_Mease_sub2"/>
</dbReference>
<dbReference type="InterPro" id="IPR004551">
    <property type="entry name" value="Dphthn_synthase"/>
</dbReference>
<dbReference type="NCBIfam" id="TIGR00522">
    <property type="entry name" value="dph5"/>
    <property type="match status" value="1"/>
</dbReference>
<dbReference type="PANTHER" id="PTHR10882:SF0">
    <property type="entry name" value="DIPHTHINE METHYL ESTER SYNTHASE"/>
    <property type="match status" value="1"/>
</dbReference>
<dbReference type="PANTHER" id="PTHR10882">
    <property type="entry name" value="DIPHTHINE SYNTHASE"/>
    <property type="match status" value="1"/>
</dbReference>
<dbReference type="Pfam" id="PF00590">
    <property type="entry name" value="TP_methylase"/>
    <property type="match status" value="1"/>
</dbReference>
<dbReference type="PIRSF" id="PIRSF036432">
    <property type="entry name" value="Diphthine_synth"/>
    <property type="match status" value="1"/>
</dbReference>
<dbReference type="SUPFAM" id="SSF53790">
    <property type="entry name" value="Tetrapyrrole methylase"/>
    <property type="match status" value="1"/>
</dbReference>
<sequence length="255" mass="28655">MLVMAGLGLYDERDVTLKTLDFAKKVDKIYAEFYTAILTGTTMEKVEETLQKPITVLDREKVEYETNKLIEEAKDKDIMFLTAGDPMVATTHVDIAVEARKKGIEVVIINAPSIYSAIGITGLQLYKFGKTTSIVFPEPNYFPETPYDVIKDNLKLGYHTLCLLDIQADKERFMTANEGLSALLEIEEKRNENVISGETHAAVVARAGSTKPGLYYGKIKDLINYDFGTPLHCVIIPGKLHFMEEDALKYLFENI</sequence>